<name>RL6_SYNPW</name>
<gene>
    <name evidence="1" type="primary">rplF</name>
    <name evidence="1" type="synonym">rpl6</name>
    <name type="ordered locus">SynWH7803_0420</name>
</gene>
<dbReference type="EMBL" id="CT971583">
    <property type="protein sequence ID" value="CAK22846.1"/>
    <property type="molecule type" value="Genomic_DNA"/>
</dbReference>
<dbReference type="SMR" id="A5GIT1"/>
<dbReference type="STRING" id="32051.SynWH7803_0420"/>
<dbReference type="KEGG" id="syx:SynWH7803_0420"/>
<dbReference type="eggNOG" id="COG0097">
    <property type="taxonomic scope" value="Bacteria"/>
</dbReference>
<dbReference type="HOGENOM" id="CLU_065464_1_2_3"/>
<dbReference type="OrthoDB" id="9805007at2"/>
<dbReference type="Proteomes" id="UP000001566">
    <property type="component" value="Chromosome"/>
</dbReference>
<dbReference type="GO" id="GO:0022625">
    <property type="term" value="C:cytosolic large ribosomal subunit"/>
    <property type="evidence" value="ECO:0007669"/>
    <property type="project" value="TreeGrafter"/>
</dbReference>
<dbReference type="GO" id="GO:0019843">
    <property type="term" value="F:rRNA binding"/>
    <property type="evidence" value="ECO:0007669"/>
    <property type="project" value="UniProtKB-UniRule"/>
</dbReference>
<dbReference type="GO" id="GO:0003735">
    <property type="term" value="F:structural constituent of ribosome"/>
    <property type="evidence" value="ECO:0007669"/>
    <property type="project" value="InterPro"/>
</dbReference>
<dbReference type="GO" id="GO:0002181">
    <property type="term" value="P:cytoplasmic translation"/>
    <property type="evidence" value="ECO:0007669"/>
    <property type="project" value="TreeGrafter"/>
</dbReference>
<dbReference type="FunFam" id="3.90.930.12:FF:000001">
    <property type="entry name" value="50S ribosomal protein L6"/>
    <property type="match status" value="1"/>
</dbReference>
<dbReference type="FunFam" id="3.90.930.12:FF:000002">
    <property type="entry name" value="50S ribosomal protein L6"/>
    <property type="match status" value="1"/>
</dbReference>
<dbReference type="Gene3D" id="3.90.930.12">
    <property type="entry name" value="Ribosomal protein L6, alpha-beta domain"/>
    <property type="match status" value="2"/>
</dbReference>
<dbReference type="HAMAP" id="MF_01365_B">
    <property type="entry name" value="Ribosomal_uL6_B"/>
    <property type="match status" value="1"/>
</dbReference>
<dbReference type="InterPro" id="IPR000702">
    <property type="entry name" value="Ribosomal_uL6-like"/>
</dbReference>
<dbReference type="InterPro" id="IPR036789">
    <property type="entry name" value="Ribosomal_uL6-like_a/b-dom_sf"/>
</dbReference>
<dbReference type="InterPro" id="IPR020040">
    <property type="entry name" value="Ribosomal_uL6_a/b-dom"/>
</dbReference>
<dbReference type="InterPro" id="IPR019906">
    <property type="entry name" value="Ribosomal_uL6_bac-type"/>
</dbReference>
<dbReference type="InterPro" id="IPR002358">
    <property type="entry name" value="Ribosomal_uL6_CS"/>
</dbReference>
<dbReference type="NCBIfam" id="TIGR03654">
    <property type="entry name" value="L6_bact"/>
    <property type="match status" value="1"/>
</dbReference>
<dbReference type="PANTHER" id="PTHR11655">
    <property type="entry name" value="60S/50S RIBOSOMAL PROTEIN L6/L9"/>
    <property type="match status" value="1"/>
</dbReference>
<dbReference type="PANTHER" id="PTHR11655:SF14">
    <property type="entry name" value="LARGE RIBOSOMAL SUBUNIT PROTEIN UL6M"/>
    <property type="match status" value="1"/>
</dbReference>
<dbReference type="Pfam" id="PF00347">
    <property type="entry name" value="Ribosomal_L6"/>
    <property type="match status" value="2"/>
</dbReference>
<dbReference type="PIRSF" id="PIRSF002162">
    <property type="entry name" value="Ribosomal_L6"/>
    <property type="match status" value="1"/>
</dbReference>
<dbReference type="PRINTS" id="PR00059">
    <property type="entry name" value="RIBOSOMALL6"/>
</dbReference>
<dbReference type="SUPFAM" id="SSF56053">
    <property type="entry name" value="Ribosomal protein L6"/>
    <property type="match status" value="2"/>
</dbReference>
<dbReference type="PROSITE" id="PS00525">
    <property type="entry name" value="RIBOSOMAL_L6_1"/>
    <property type="match status" value="1"/>
</dbReference>
<reference key="1">
    <citation type="submission" date="2006-05" db="EMBL/GenBank/DDBJ databases">
        <authorList>
            <consortium name="Genoscope"/>
        </authorList>
    </citation>
    <scope>NUCLEOTIDE SEQUENCE [LARGE SCALE GENOMIC DNA]</scope>
    <source>
        <strain>WH7803</strain>
    </source>
</reference>
<organism>
    <name type="scientific">Synechococcus sp. (strain WH7803)</name>
    <dbReference type="NCBI Taxonomy" id="32051"/>
    <lineage>
        <taxon>Bacteria</taxon>
        <taxon>Bacillati</taxon>
        <taxon>Cyanobacteriota</taxon>
        <taxon>Cyanophyceae</taxon>
        <taxon>Synechococcales</taxon>
        <taxon>Synechococcaceae</taxon>
        <taxon>Synechococcus</taxon>
    </lineage>
</organism>
<comment type="function">
    <text evidence="1">This protein binds to the 23S rRNA, and is important in its secondary structure. It is located near the subunit interface in the base of the L7/L12 stalk, and near the tRNA binding site of the peptidyltransferase center.</text>
</comment>
<comment type="subunit">
    <text evidence="1">Part of the 50S ribosomal subunit.</text>
</comment>
<comment type="similarity">
    <text evidence="1">Belongs to the universal ribosomal protein uL6 family.</text>
</comment>
<keyword id="KW-1185">Reference proteome</keyword>
<keyword id="KW-0687">Ribonucleoprotein</keyword>
<keyword id="KW-0689">Ribosomal protein</keyword>
<keyword id="KW-0694">RNA-binding</keyword>
<keyword id="KW-0699">rRNA-binding</keyword>
<evidence type="ECO:0000255" key="1">
    <source>
        <dbReference type="HAMAP-Rule" id="MF_01365"/>
    </source>
</evidence>
<evidence type="ECO:0000305" key="2"/>
<protein>
    <recommendedName>
        <fullName evidence="1">Large ribosomal subunit protein uL6</fullName>
    </recommendedName>
    <alternativeName>
        <fullName evidence="2">50S ribosomal protein L6</fullName>
    </alternativeName>
</protein>
<proteinExistence type="inferred from homology"/>
<accession>A5GIT1</accession>
<sequence length="179" mass="19056">MSRIGKSPIPIPDKVSVSLDGLAVTVKGPKGELKRTLPDGVTVNQVDNTIVVAPTSEKRQSRERHGLCRTLVANMIEGVSKGYSKKLEIVGVGSRAQVKGKTLVVSAGYSHPVEMLAPEGITFAVENNTNVTVSGTDKELVGNEAAKIRAIRPPEPYKGKGIKYAGERILRKAGKSGKK</sequence>
<feature type="chain" id="PRO_1000055323" description="Large ribosomal subunit protein uL6">
    <location>
        <begin position="1"/>
        <end position="179"/>
    </location>
</feature>